<dbReference type="EMBL" id="CR382126">
    <property type="protein sequence ID" value="CAG97969.1"/>
    <property type="molecule type" value="Genomic_DNA"/>
</dbReference>
<dbReference type="RefSeq" id="XP_455261.1">
    <property type="nucleotide sequence ID" value="XM_455261.1"/>
</dbReference>
<dbReference type="SMR" id="Q6CLC8"/>
<dbReference type="DIP" id="DIP-62105N"/>
<dbReference type="FunCoup" id="Q6CLC8">
    <property type="interactions" value="294"/>
</dbReference>
<dbReference type="STRING" id="284590.Q6CLC8"/>
<dbReference type="PaxDb" id="284590-Q6CLC8"/>
<dbReference type="KEGG" id="kla:KLLA0_F03993g"/>
<dbReference type="eggNOG" id="KOG3758">
    <property type="taxonomic scope" value="Eukaryota"/>
</dbReference>
<dbReference type="HOGENOM" id="CLU_017837_0_0_1"/>
<dbReference type="InParanoid" id="Q6CLC8"/>
<dbReference type="OMA" id="IINMICP"/>
<dbReference type="Proteomes" id="UP000000598">
    <property type="component" value="Chromosome F"/>
</dbReference>
<dbReference type="GO" id="GO:0000139">
    <property type="term" value="C:Golgi membrane"/>
    <property type="evidence" value="ECO:0007669"/>
    <property type="project" value="UniProtKB-SubCell"/>
</dbReference>
<dbReference type="GO" id="GO:0017119">
    <property type="term" value="C:Golgi transport complex"/>
    <property type="evidence" value="ECO:0007669"/>
    <property type="project" value="InterPro"/>
</dbReference>
<dbReference type="GO" id="GO:0006891">
    <property type="term" value="P:intra-Golgi vesicle-mediated transport"/>
    <property type="evidence" value="ECO:0007669"/>
    <property type="project" value="InterPro"/>
</dbReference>
<dbReference type="GO" id="GO:0015031">
    <property type="term" value="P:protein transport"/>
    <property type="evidence" value="ECO:0007669"/>
    <property type="project" value="UniProtKB-KW"/>
</dbReference>
<dbReference type="InterPro" id="IPR010490">
    <property type="entry name" value="COG6"/>
</dbReference>
<dbReference type="InterPro" id="IPR048369">
    <property type="entry name" value="COG6_C"/>
</dbReference>
<dbReference type="InterPro" id="IPR048368">
    <property type="entry name" value="COG6_N"/>
</dbReference>
<dbReference type="PANTHER" id="PTHR21506">
    <property type="entry name" value="COMPONENT OF OLIGOMERIC GOLGI COMPLEX 6"/>
    <property type="match status" value="1"/>
</dbReference>
<dbReference type="PANTHER" id="PTHR21506:SF0">
    <property type="entry name" value="CONSERVED OLIGOMERIC GOLGI COMPLEX SUBUNIT 6"/>
    <property type="match status" value="1"/>
</dbReference>
<dbReference type="Pfam" id="PF20653">
    <property type="entry name" value="COG6_C"/>
    <property type="match status" value="1"/>
</dbReference>
<dbReference type="Pfam" id="PF06419">
    <property type="entry name" value="COG6_N"/>
    <property type="match status" value="1"/>
</dbReference>
<dbReference type="SMART" id="SM01087">
    <property type="entry name" value="COG6"/>
    <property type="match status" value="1"/>
</dbReference>
<protein>
    <recommendedName>
        <fullName>Conserved oligomeric Golgi complex subunit 6</fullName>
        <shortName>COG complex subunit 6</shortName>
    </recommendedName>
    <alternativeName>
        <fullName>Component of oligomeric Golgi complex 6</fullName>
    </alternativeName>
</protein>
<accession>Q6CLC8</accession>
<gene>
    <name type="primary">COG6</name>
    <name type="ordered locus">KLLA0F03993g</name>
</gene>
<comment type="function">
    <text evidence="1">Acts as a component of the peripheral membrane COG complex that is involved in intra-Golgi protein trafficking. COG is located at the cis-Golgi, and regulates tethering of retrograde intra-Golgi vesicles and possibly a number of other membrane trafficking events (By similarity).</text>
</comment>
<comment type="subcellular location">
    <subcellularLocation>
        <location evidence="1">Golgi apparatus membrane</location>
        <topology evidence="1">Peripheral membrane protein</topology>
    </subcellularLocation>
</comment>
<comment type="similarity">
    <text evidence="2">Belongs to the COG6 family.</text>
</comment>
<keyword id="KW-0333">Golgi apparatus</keyword>
<keyword id="KW-0472">Membrane</keyword>
<keyword id="KW-0653">Protein transport</keyword>
<keyword id="KW-1185">Reference proteome</keyword>
<keyword id="KW-0813">Transport</keyword>
<name>COG6_KLULA</name>
<organism>
    <name type="scientific">Kluyveromyces lactis (strain ATCC 8585 / CBS 2359 / DSM 70799 / NBRC 1267 / NRRL Y-1140 / WM37)</name>
    <name type="common">Yeast</name>
    <name type="synonym">Candida sphaerica</name>
    <dbReference type="NCBI Taxonomy" id="284590"/>
    <lineage>
        <taxon>Eukaryota</taxon>
        <taxon>Fungi</taxon>
        <taxon>Dikarya</taxon>
        <taxon>Ascomycota</taxon>
        <taxon>Saccharomycotina</taxon>
        <taxon>Saccharomycetes</taxon>
        <taxon>Saccharomycetales</taxon>
        <taxon>Saccharomycetaceae</taxon>
        <taxon>Kluyveromyces</taxon>
    </lineage>
</organism>
<feature type="chain" id="PRO_0000339323" description="Conserved oligomeric Golgi complex subunit 6">
    <location>
        <begin position="1"/>
        <end position="779"/>
    </location>
</feature>
<evidence type="ECO:0000250" key="1"/>
<evidence type="ECO:0000305" key="2"/>
<sequence>MDFLDFPALVVDESAALPQPASRLSLASLRLNDDEQEAKFVLPNVSKHDTEFTDLHSKMKHFASISLGEIRPASVSLSKEVAAPISNNIEKPTTTNQLLSKKINSLLNVPNYASYTSDSETKRALQILDANHSDLGLNFNQLVASDFVGTLNRKSLRSKLENSMLNSHSDILSNFQSIARRIKRLSGPLERINNAMQNFKDTTESIDFEFEHVKDRLDQLKARRQVIIKLRDSLTLTQLELDHLQNGTINDLFFQILNKINFIKEKATYLLSNEKTTSAGVALLKTMNNNLTVSNKRIYNYLINFIEEYDTLSRQYGERTIGDESLSNFQTSLIHLSNDVQFFQDFLNRIVGLRSKRLLDDFLSQFDIDNKKLQRPIILSAHDPVRYLGDVLAYVHSMIVNELEFLKSTFKLKSELVTSDSVLKDNMDFIGDLHLKLLNEIFTSLANTIRIRLEQIVRFENNPMLNLDIVQCLSLYQMMLVKNGINESSQLMTSLNDLENLARSKIVSSVTSYLKDLDKNQIAAADLLPPDWFVDYLSKLSQLLNKLEQQNETRILTDDLYDKLILDPINNNLVLNLQNWFPTAKKEKSARIDLLIVQINSFDLVKSKLGPFHSTIFSSDYGKSVFSKLETQYTLCVTKLKETMNSYLFESTGMELYFNLFNMIFPIISVQDELDYDMYLSAVENPIMKLAVIHDNIHEKLNTYLPLAVSDFQDVKLFNLMPPAVEEDIVSTCFGNFIKFYKVFKSVLNKIYPEDEEMIMSTLNFTTNEVSTLLGVEDK</sequence>
<reference key="1">
    <citation type="journal article" date="2004" name="Nature">
        <title>Genome evolution in yeasts.</title>
        <authorList>
            <person name="Dujon B."/>
            <person name="Sherman D."/>
            <person name="Fischer G."/>
            <person name="Durrens P."/>
            <person name="Casaregola S."/>
            <person name="Lafontaine I."/>
            <person name="de Montigny J."/>
            <person name="Marck C."/>
            <person name="Neuveglise C."/>
            <person name="Talla E."/>
            <person name="Goffard N."/>
            <person name="Frangeul L."/>
            <person name="Aigle M."/>
            <person name="Anthouard V."/>
            <person name="Babour A."/>
            <person name="Barbe V."/>
            <person name="Barnay S."/>
            <person name="Blanchin S."/>
            <person name="Beckerich J.-M."/>
            <person name="Beyne E."/>
            <person name="Bleykasten C."/>
            <person name="Boisrame A."/>
            <person name="Boyer J."/>
            <person name="Cattolico L."/>
            <person name="Confanioleri F."/>
            <person name="de Daruvar A."/>
            <person name="Despons L."/>
            <person name="Fabre E."/>
            <person name="Fairhead C."/>
            <person name="Ferry-Dumazet H."/>
            <person name="Groppi A."/>
            <person name="Hantraye F."/>
            <person name="Hennequin C."/>
            <person name="Jauniaux N."/>
            <person name="Joyet P."/>
            <person name="Kachouri R."/>
            <person name="Kerrest A."/>
            <person name="Koszul R."/>
            <person name="Lemaire M."/>
            <person name="Lesur I."/>
            <person name="Ma L."/>
            <person name="Muller H."/>
            <person name="Nicaud J.-M."/>
            <person name="Nikolski M."/>
            <person name="Oztas S."/>
            <person name="Ozier-Kalogeropoulos O."/>
            <person name="Pellenz S."/>
            <person name="Potier S."/>
            <person name="Richard G.-F."/>
            <person name="Straub M.-L."/>
            <person name="Suleau A."/>
            <person name="Swennen D."/>
            <person name="Tekaia F."/>
            <person name="Wesolowski-Louvel M."/>
            <person name="Westhof E."/>
            <person name="Wirth B."/>
            <person name="Zeniou-Meyer M."/>
            <person name="Zivanovic Y."/>
            <person name="Bolotin-Fukuhara M."/>
            <person name="Thierry A."/>
            <person name="Bouchier C."/>
            <person name="Caudron B."/>
            <person name="Scarpelli C."/>
            <person name="Gaillardin C."/>
            <person name="Weissenbach J."/>
            <person name="Wincker P."/>
            <person name="Souciet J.-L."/>
        </authorList>
    </citation>
    <scope>NUCLEOTIDE SEQUENCE [LARGE SCALE GENOMIC DNA]</scope>
    <source>
        <strain>ATCC 8585 / CBS 2359 / DSM 70799 / NBRC 1267 / NRRL Y-1140 / WM37</strain>
    </source>
</reference>
<proteinExistence type="inferred from homology"/>